<reference key="1">
    <citation type="submission" date="2003-03" db="EMBL/GenBank/DDBJ databases">
        <title>African swine fever virus genomes.</title>
        <authorList>
            <person name="Kutish G.F."/>
            <person name="Rock D.L."/>
        </authorList>
    </citation>
    <scope>NUCLEOTIDE SEQUENCE [LARGE SCALE GENOMIC DNA]</scope>
</reference>
<sequence>MSSLLKPDFNVSKYRLIAQKREANAVEIEAALEVVREFIIKKKLILYGGIAIDYALHLKGSSIYPEGERPDFDMFSPNHVEDAYELADILYEKGFKQVGTVRAIHVQTMRVRTDFVWVADLSYMPPNIFDTIPTLTYKNLKIIHPDYQRAGLHLAFCFPFDNPPREDVFSRFKKDLQRYNLIEKYYPIPVVPVKSTYESKTFSIPFKQVAIHGFAAYALLYQTLNELRITCKVPEWKTEFPQPSYSYHKNDKNITLTIDMPRAYPALVLATYNPEGVIKEMGLHLTEICEPYMDYSPPIFKTNDIHFFSTMFKELAISIIQDNLIVVSPQYLLLYFLYGAFATPADKSLFLFYYNATLWILEKADSLLNIIQKQTSPEEFTRFANTSPFVLTTRVLSCSQERCTFSPAYRISLANDVQQSQLPLPKTHFLSNSLPDISTLPYNYYPGKGKEKPTNFSYEKNLLFNIGGKCTPSAM</sequence>
<evidence type="ECO:0000250" key="1">
    <source>
        <dbReference type="UniProtKB" id="Q65159"/>
    </source>
</evidence>
<evidence type="ECO:0000305" key="2"/>
<organismHost>
    <name type="scientific">Ornithodoros</name>
    <name type="common">relapsing fever ticks</name>
    <dbReference type="NCBI Taxonomy" id="6937"/>
</organismHost>
<organismHost>
    <name type="scientific">Phacochoerus aethiopicus</name>
    <name type="common">Warthog</name>
    <dbReference type="NCBI Taxonomy" id="85517"/>
</organismHost>
<organismHost>
    <name type="scientific">Phacochoerus africanus</name>
    <name type="common">Warthog</name>
    <dbReference type="NCBI Taxonomy" id="41426"/>
</organismHost>
<organismHost>
    <name type="scientific">Potamochoerus larvatus</name>
    <name type="common">Bushpig</name>
    <dbReference type="NCBI Taxonomy" id="273792"/>
</organismHost>
<organismHost>
    <name type="scientific">Sus scrofa</name>
    <name type="common">Pig</name>
    <dbReference type="NCBI Taxonomy" id="9823"/>
</organismHost>
<proteinExistence type="inferred from homology"/>
<dbReference type="EC" id="2.7.7.19"/>
<dbReference type="EMBL" id="AY261366">
    <property type="status" value="NOT_ANNOTATED_CDS"/>
    <property type="molecule type" value="Genomic_DNA"/>
</dbReference>
<dbReference type="SMR" id="P0C9D4"/>
<dbReference type="Proteomes" id="UP000000858">
    <property type="component" value="Segment"/>
</dbReference>
<dbReference type="GO" id="GO:0044423">
    <property type="term" value="C:virion component"/>
    <property type="evidence" value="ECO:0007669"/>
    <property type="project" value="UniProtKB-KW"/>
</dbReference>
<dbReference type="GO" id="GO:0005524">
    <property type="term" value="F:ATP binding"/>
    <property type="evidence" value="ECO:0007669"/>
    <property type="project" value="UniProtKB-KW"/>
</dbReference>
<dbReference type="GO" id="GO:1990817">
    <property type="term" value="F:poly(A) RNA polymerase activity"/>
    <property type="evidence" value="ECO:0007669"/>
    <property type="project" value="UniProtKB-EC"/>
</dbReference>
<dbReference type="GO" id="GO:0006397">
    <property type="term" value="P:mRNA processing"/>
    <property type="evidence" value="ECO:0007669"/>
    <property type="project" value="UniProtKB-KW"/>
</dbReference>
<dbReference type="CDD" id="cd20924">
    <property type="entry name" value="polyA_pol_Asfar"/>
    <property type="match status" value="1"/>
</dbReference>
<dbReference type="InterPro" id="IPR045355">
    <property type="entry name" value="PolyA_pol_cat_su"/>
</dbReference>
<dbReference type="Pfam" id="PF19244">
    <property type="entry name" value="Poly_A_pol_cat"/>
    <property type="match status" value="1"/>
</dbReference>
<name>PAP1_ASFWA</name>
<organism>
    <name type="scientific">African swine fever virus (isolate Warthog/Namibia/Wart80/1980)</name>
    <name type="common">ASFV</name>
    <dbReference type="NCBI Taxonomy" id="561444"/>
    <lineage>
        <taxon>Viruses</taxon>
        <taxon>Varidnaviria</taxon>
        <taxon>Bamfordvirae</taxon>
        <taxon>Nucleocytoviricota</taxon>
        <taxon>Pokkesviricetes</taxon>
        <taxon>Asfuvirales</taxon>
        <taxon>Asfarviridae</taxon>
        <taxon>Asfivirus</taxon>
        <taxon>African swine fever virus</taxon>
    </lineage>
</organism>
<accession>P0C9D4</accession>
<keyword id="KW-0067">ATP-binding</keyword>
<keyword id="KW-0426">Late protein</keyword>
<keyword id="KW-0507">mRNA processing</keyword>
<keyword id="KW-0547">Nucleotide-binding</keyword>
<keyword id="KW-0804">Transcription</keyword>
<keyword id="KW-0808">Transferase</keyword>
<keyword id="KW-0946">Virion</keyword>
<protein>
    <recommendedName>
        <fullName evidence="1">Putative poly(A) polymerase catalytic subunit</fullName>
        <ecNumber>2.7.7.19</ecNumber>
    </recommendedName>
</protein>
<comment type="function">
    <text evidence="2">Polymerase that creates the 3'-poly(A) tail of mRNAs.</text>
</comment>
<comment type="catalytic activity">
    <reaction>
        <text>RNA(n) + ATP = RNA(n)-3'-adenine ribonucleotide + diphosphate</text>
        <dbReference type="Rhea" id="RHEA:11332"/>
        <dbReference type="Rhea" id="RHEA-COMP:14527"/>
        <dbReference type="Rhea" id="RHEA-COMP:17347"/>
        <dbReference type="ChEBI" id="CHEBI:30616"/>
        <dbReference type="ChEBI" id="CHEBI:33019"/>
        <dbReference type="ChEBI" id="CHEBI:140395"/>
        <dbReference type="ChEBI" id="CHEBI:173115"/>
        <dbReference type="EC" id="2.7.7.19"/>
    </reaction>
</comment>
<comment type="subcellular location">
    <subcellularLocation>
        <location evidence="1">Virion</location>
    </subcellularLocation>
</comment>
<comment type="induction">
    <text evidence="2">Expressed in the late phase of the viral replicative cycle.</text>
</comment>
<comment type="similarity">
    <text evidence="2">Belongs to the poxviridae poly(A) polymerase catalytic subunit family. Highly divergent.</text>
</comment>
<gene>
    <name type="ordered locus">War-077</name>
</gene>
<feature type="chain" id="PRO_0000373150" description="Putative poly(A) polymerase catalytic subunit">
    <location>
        <begin position="1"/>
        <end position="475"/>
    </location>
</feature>